<comment type="function">
    <text evidence="1">Is probably a protein kinase regulator of UbiI activity which is involved in aerobic coenzyme Q (ubiquinone) biosynthesis.</text>
</comment>
<comment type="pathway">
    <text>Cofactor biosynthesis; ubiquinone biosynthesis [regulation].</text>
</comment>
<comment type="subcellular location">
    <subcellularLocation>
        <location evidence="1">Cell inner membrane</location>
        <topology evidence="1">Multi-pass membrane protein</topology>
    </subcellularLocation>
</comment>
<comment type="similarity">
    <text evidence="1">Belongs to the ABC1 family. UbiB subfamily.</text>
</comment>
<feature type="chain" id="PRO_0000200721" description="Probable protein kinase UbiB">
    <location>
        <begin position="1"/>
        <end position="544"/>
    </location>
</feature>
<feature type="transmembrane region" description="Helical" evidence="1">
    <location>
        <begin position="496"/>
        <end position="516"/>
    </location>
</feature>
<feature type="transmembrane region" description="Helical" evidence="1">
    <location>
        <begin position="519"/>
        <end position="539"/>
    </location>
</feature>
<feature type="domain" description="Protein kinase" evidence="1">
    <location>
        <begin position="123"/>
        <end position="501"/>
    </location>
</feature>
<feature type="active site" description="Proton acceptor" evidence="1">
    <location>
        <position position="287"/>
    </location>
</feature>
<feature type="binding site" evidence="1">
    <location>
        <begin position="129"/>
        <end position="137"/>
    </location>
    <ligand>
        <name>ATP</name>
        <dbReference type="ChEBI" id="CHEBI:30616"/>
    </ligand>
</feature>
<feature type="binding site" evidence="1">
    <location>
        <position position="152"/>
    </location>
    <ligand>
        <name>ATP</name>
        <dbReference type="ChEBI" id="CHEBI:30616"/>
    </ligand>
</feature>
<protein>
    <recommendedName>
        <fullName evidence="1">Probable protein kinase UbiB</fullName>
        <ecNumber evidence="1">2.7.-.-</ecNumber>
    </recommendedName>
    <alternativeName>
        <fullName evidence="1">Ubiquinone biosynthesis protein UbiB</fullName>
    </alternativeName>
</protein>
<organism>
    <name type="scientific">Vibrio parahaemolyticus serotype O3:K6 (strain RIMD 2210633)</name>
    <dbReference type="NCBI Taxonomy" id="223926"/>
    <lineage>
        <taxon>Bacteria</taxon>
        <taxon>Pseudomonadati</taxon>
        <taxon>Pseudomonadota</taxon>
        <taxon>Gammaproteobacteria</taxon>
        <taxon>Vibrionales</taxon>
        <taxon>Vibrionaceae</taxon>
        <taxon>Vibrio</taxon>
    </lineage>
</organism>
<keyword id="KW-0067">ATP-binding</keyword>
<keyword id="KW-0997">Cell inner membrane</keyword>
<keyword id="KW-1003">Cell membrane</keyword>
<keyword id="KW-0418">Kinase</keyword>
<keyword id="KW-0472">Membrane</keyword>
<keyword id="KW-0547">Nucleotide-binding</keyword>
<keyword id="KW-0808">Transferase</keyword>
<keyword id="KW-0812">Transmembrane</keyword>
<keyword id="KW-1133">Transmembrane helix</keyword>
<keyword id="KW-0831">Ubiquinone biosynthesis</keyword>
<sequence>MTPAELKRLYHIIKVQLEYGLDELLPDHQLTKAPLLMRKSLFWIKNQHPEKPLGERLRLALQELGPVWIKFGQMMSTRRDLFPPHIADPLALLQDQVAPFDGELAKQQMEKALGGPLENWFTEFDIKPLASASIAQVHTARLKDTNQEVVLKVIRPDIRPVIDSDLKLMHRMARIVAGAMPEARRLKPVEVVREYEKTLLDELDLRREAANAIQLRRNFEGSEELYVPEVFPDFSNETVMVSERIYGIQVSDIEGLEANGTNMKLLAERGVSVFFTQVFRDSFFHADMHPGNVFVKPEHPENPMWIGLDCGIVGTLNSEDKRYLAENFLAFFNRDYRRVAELHVDSGWVPADTNVDEFEFAIRIVCEPIFAKPLCEISFGHVLLNLFNTARRFNMEVQPQLVLLQKTLLYVEGLGRQLYPQLDLWETAKPFLEEWMMNQVGPQALVNSIKDRAPFWAEKLPELPELLYDSLKQGKAMNQRMDLLYQGYRQSKRQQATGKFLFGVGATLVVCSAILVDNAYEQLSMASGIAGVTFWLLSWRAYRQ</sequence>
<accession>Q87TH2</accession>
<evidence type="ECO:0000255" key="1">
    <source>
        <dbReference type="HAMAP-Rule" id="MF_00414"/>
    </source>
</evidence>
<reference key="1">
    <citation type="journal article" date="2003" name="Lancet">
        <title>Genome sequence of Vibrio parahaemolyticus: a pathogenic mechanism distinct from that of V. cholerae.</title>
        <authorList>
            <person name="Makino K."/>
            <person name="Oshima K."/>
            <person name="Kurokawa K."/>
            <person name="Yokoyama K."/>
            <person name="Uda T."/>
            <person name="Tagomori K."/>
            <person name="Iijima Y."/>
            <person name="Najima M."/>
            <person name="Nakano M."/>
            <person name="Yamashita A."/>
            <person name="Kubota Y."/>
            <person name="Kimura S."/>
            <person name="Yasunaga T."/>
            <person name="Honda T."/>
            <person name="Shinagawa H."/>
            <person name="Hattori M."/>
            <person name="Iida T."/>
        </authorList>
    </citation>
    <scope>NUCLEOTIDE SEQUENCE [LARGE SCALE GENOMIC DNA]</scope>
    <source>
        <strain>RIMD 2210633</strain>
    </source>
</reference>
<dbReference type="EC" id="2.7.-.-" evidence="1"/>
<dbReference type="EMBL" id="BA000031">
    <property type="protein sequence ID" value="BAC58360.1"/>
    <property type="molecule type" value="Genomic_DNA"/>
</dbReference>
<dbReference type="RefSeq" id="NP_796476.1">
    <property type="nucleotide sequence ID" value="NC_004603.1"/>
</dbReference>
<dbReference type="RefSeq" id="WP_005478626.1">
    <property type="nucleotide sequence ID" value="NC_004603.1"/>
</dbReference>
<dbReference type="SMR" id="Q87TH2"/>
<dbReference type="GeneID" id="1187564"/>
<dbReference type="KEGG" id="vpa:VP0097"/>
<dbReference type="PATRIC" id="fig|223926.6.peg.92"/>
<dbReference type="eggNOG" id="COG0661">
    <property type="taxonomic scope" value="Bacteria"/>
</dbReference>
<dbReference type="HOGENOM" id="CLU_006533_0_0_6"/>
<dbReference type="UniPathway" id="UPA00232"/>
<dbReference type="Proteomes" id="UP000002493">
    <property type="component" value="Chromosome 1"/>
</dbReference>
<dbReference type="GO" id="GO:0005886">
    <property type="term" value="C:plasma membrane"/>
    <property type="evidence" value="ECO:0007669"/>
    <property type="project" value="UniProtKB-SubCell"/>
</dbReference>
<dbReference type="GO" id="GO:0005524">
    <property type="term" value="F:ATP binding"/>
    <property type="evidence" value="ECO:0007669"/>
    <property type="project" value="UniProtKB-KW"/>
</dbReference>
<dbReference type="GO" id="GO:0004672">
    <property type="term" value="F:protein kinase activity"/>
    <property type="evidence" value="ECO:0007669"/>
    <property type="project" value="UniProtKB-UniRule"/>
</dbReference>
<dbReference type="GO" id="GO:0010795">
    <property type="term" value="P:regulation of ubiquinone biosynthetic process"/>
    <property type="evidence" value="ECO:0007669"/>
    <property type="project" value="UniProtKB-UniRule"/>
</dbReference>
<dbReference type="GO" id="GO:0006744">
    <property type="term" value="P:ubiquinone biosynthetic process"/>
    <property type="evidence" value="ECO:0007669"/>
    <property type="project" value="UniProtKB-UniPathway"/>
</dbReference>
<dbReference type="CDD" id="cd13972">
    <property type="entry name" value="UbiB"/>
    <property type="match status" value="1"/>
</dbReference>
<dbReference type="HAMAP" id="MF_00414">
    <property type="entry name" value="UbiB"/>
    <property type="match status" value="1"/>
</dbReference>
<dbReference type="InterPro" id="IPR004147">
    <property type="entry name" value="ABC1_dom"/>
</dbReference>
<dbReference type="InterPro" id="IPR011009">
    <property type="entry name" value="Kinase-like_dom_sf"/>
</dbReference>
<dbReference type="InterPro" id="IPR010232">
    <property type="entry name" value="UbiB"/>
</dbReference>
<dbReference type="InterPro" id="IPR045308">
    <property type="entry name" value="UbiB_bact"/>
</dbReference>
<dbReference type="InterPro" id="IPR050154">
    <property type="entry name" value="UbiB_kinase"/>
</dbReference>
<dbReference type="NCBIfam" id="NF003404">
    <property type="entry name" value="PRK04750.1"/>
    <property type="match status" value="1"/>
</dbReference>
<dbReference type="NCBIfam" id="TIGR01982">
    <property type="entry name" value="UbiB"/>
    <property type="match status" value="1"/>
</dbReference>
<dbReference type="PANTHER" id="PTHR10566">
    <property type="entry name" value="CHAPERONE-ACTIVITY OF BC1 COMPLEX CABC1 -RELATED"/>
    <property type="match status" value="1"/>
</dbReference>
<dbReference type="PANTHER" id="PTHR10566:SF113">
    <property type="entry name" value="PROTEIN ACTIVITY OF BC1 COMPLEX KINASE 7, CHLOROPLASTIC"/>
    <property type="match status" value="1"/>
</dbReference>
<dbReference type="Pfam" id="PF03109">
    <property type="entry name" value="ABC1"/>
    <property type="match status" value="1"/>
</dbReference>
<dbReference type="SUPFAM" id="SSF56112">
    <property type="entry name" value="Protein kinase-like (PK-like)"/>
    <property type="match status" value="1"/>
</dbReference>
<name>UBIB_VIBPA</name>
<gene>
    <name evidence="1" type="primary">ubiB</name>
    <name type="synonym">aarF</name>
    <name type="ordered locus">VP0097</name>
</gene>
<proteinExistence type="inferred from homology"/>